<name>ANM62_ORYSJ</name>
<comment type="function">
    <text evidence="1">Arginine methyltransferase that can both catalyze the formation of omega-N monomethylarginine (MMA) and asymmetrical dimethylarginine (aDMA).</text>
</comment>
<comment type="similarity">
    <text evidence="2">Belongs to the class I-like SAM-binding methyltransferase superfamily. Protein arginine N-methyltransferase family. PRMT6 subfamily.</text>
</comment>
<evidence type="ECO:0000250" key="1"/>
<evidence type="ECO:0000255" key="2">
    <source>
        <dbReference type="PROSITE-ProRule" id="PRU01015"/>
    </source>
</evidence>
<evidence type="ECO:0000256" key="3">
    <source>
        <dbReference type="SAM" id="MobiDB-lite"/>
    </source>
</evidence>
<evidence type="ECO:0000305" key="4"/>
<dbReference type="EC" id="2.1.1.-"/>
<dbReference type="EMBL" id="AC146481">
    <property type="protein sequence ID" value="AAR87362.1"/>
    <property type="molecule type" value="Genomic_DNA"/>
</dbReference>
<dbReference type="EMBL" id="DP000086">
    <property type="protein sequence ID" value="ABB47810.2"/>
    <property type="molecule type" value="Genomic_DNA"/>
</dbReference>
<dbReference type="EMBL" id="AP008216">
    <property type="protein sequence ID" value="BAF26830.1"/>
    <property type="molecule type" value="Genomic_DNA"/>
</dbReference>
<dbReference type="EMBL" id="AP014966">
    <property type="protein sequence ID" value="BAT11412.1"/>
    <property type="molecule type" value="Genomic_DNA"/>
</dbReference>
<dbReference type="EMBL" id="CM000147">
    <property type="status" value="NOT_ANNOTATED_CDS"/>
    <property type="molecule type" value="Genomic_DNA"/>
</dbReference>
<dbReference type="EMBL" id="AK101865">
    <property type="status" value="NOT_ANNOTATED_CDS"/>
    <property type="molecule type" value="mRNA"/>
</dbReference>
<dbReference type="RefSeq" id="XP_015614476.1">
    <property type="nucleotide sequence ID" value="XM_015758990.1"/>
</dbReference>
<dbReference type="SMR" id="Q75G68"/>
<dbReference type="FunCoup" id="Q75G68">
    <property type="interactions" value="935"/>
</dbReference>
<dbReference type="STRING" id="39947.Q75G68"/>
<dbReference type="PaxDb" id="39947-Q75G68"/>
<dbReference type="EnsemblPlants" id="Os10t0489100-01">
    <property type="protein sequence ID" value="Os10t0489100-01"/>
    <property type="gene ID" value="Os10g0489100"/>
</dbReference>
<dbReference type="Gramene" id="Os10t0489100-01">
    <property type="protein sequence ID" value="Os10t0489100-01"/>
    <property type="gene ID" value="Os10g0489100"/>
</dbReference>
<dbReference type="KEGG" id="dosa:Os10g0489100"/>
<dbReference type="eggNOG" id="KOG1499">
    <property type="taxonomic scope" value="Eukaryota"/>
</dbReference>
<dbReference type="HOGENOM" id="CLU_017375_1_2_1"/>
<dbReference type="InParanoid" id="Q75G68"/>
<dbReference type="OMA" id="CIHVDYT"/>
<dbReference type="OrthoDB" id="7848332at2759"/>
<dbReference type="Proteomes" id="UP000000763">
    <property type="component" value="Chromosome 10"/>
</dbReference>
<dbReference type="Proteomes" id="UP000007752">
    <property type="component" value="Chromosome 10"/>
</dbReference>
<dbReference type="Proteomes" id="UP000059680">
    <property type="component" value="Chromosome 10"/>
</dbReference>
<dbReference type="GO" id="GO:0042054">
    <property type="term" value="F:histone methyltransferase activity"/>
    <property type="evidence" value="ECO:0000318"/>
    <property type="project" value="GO_Central"/>
</dbReference>
<dbReference type="GO" id="GO:0016274">
    <property type="term" value="F:protein-arginine N-methyltransferase activity"/>
    <property type="evidence" value="ECO:0000318"/>
    <property type="project" value="GO_Central"/>
</dbReference>
<dbReference type="GO" id="GO:0006338">
    <property type="term" value="P:chromatin remodeling"/>
    <property type="evidence" value="ECO:0000318"/>
    <property type="project" value="GO_Central"/>
</dbReference>
<dbReference type="GO" id="GO:0032259">
    <property type="term" value="P:methylation"/>
    <property type="evidence" value="ECO:0007669"/>
    <property type="project" value="UniProtKB-KW"/>
</dbReference>
<dbReference type="GO" id="GO:0006355">
    <property type="term" value="P:regulation of DNA-templated transcription"/>
    <property type="evidence" value="ECO:0000318"/>
    <property type="project" value="GO_Central"/>
</dbReference>
<dbReference type="CDD" id="cd02440">
    <property type="entry name" value="AdoMet_MTases"/>
    <property type="match status" value="1"/>
</dbReference>
<dbReference type="FunFam" id="2.70.160.11:FF:000008">
    <property type="entry name" value="Protein arginine N-methyltransferase 6"/>
    <property type="match status" value="1"/>
</dbReference>
<dbReference type="FunFam" id="3.40.50.150:FF:000016">
    <property type="entry name" value="Protein arginine N-methyltransferase 6"/>
    <property type="match status" value="1"/>
</dbReference>
<dbReference type="Gene3D" id="2.70.160.11">
    <property type="entry name" value="Hnrnp arginine n-methyltransferase1"/>
    <property type="match status" value="1"/>
</dbReference>
<dbReference type="Gene3D" id="3.40.50.150">
    <property type="entry name" value="Vaccinia Virus protein VP39"/>
    <property type="match status" value="1"/>
</dbReference>
<dbReference type="InterPro" id="IPR025799">
    <property type="entry name" value="Arg_MeTrfase"/>
</dbReference>
<dbReference type="InterPro" id="IPR055135">
    <property type="entry name" value="PRMT_dom"/>
</dbReference>
<dbReference type="InterPro" id="IPR029063">
    <property type="entry name" value="SAM-dependent_MTases_sf"/>
</dbReference>
<dbReference type="PANTHER" id="PTHR11006">
    <property type="entry name" value="PROTEIN ARGININE N-METHYLTRANSFERASE"/>
    <property type="match status" value="1"/>
</dbReference>
<dbReference type="PANTHER" id="PTHR11006:SF73">
    <property type="entry name" value="PROTEIN ARGININE N-METHYLTRANSFERASE 6"/>
    <property type="match status" value="1"/>
</dbReference>
<dbReference type="Pfam" id="PF06325">
    <property type="entry name" value="PrmA"/>
    <property type="match status" value="1"/>
</dbReference>
<dbReference type="Pfam" id="PF22528">
    <property type="entry name" value="PRMT_C"/>
    <property type="match status" value="2"/>
</dbReference>
<dbReference type="SUPFAM" id="SSF53335">
    <property type="entry name" value="S-adenosyl-L-methionine-dependent methyltransferases"/>
    <property type="match status" value="1"/>
</dbReference>
<dbReference type="PROSITE" id="PS51678">
    <property type="entry name" value="SAM_MT_PRMT"/>
    <property type="match status" value="1"/>
</dbReference>
<protein>
    <recommendedName>
        <fullName>Probable protein arginine N-methyltransferase 6.2</fullName>
        <ecNumber>2.1.1.-</ecNumber>
    </recommendedName>
</protein>
<proteinExistence type="evidence at transcript level"/>
<reference key="1">
    <citation type="journal article" date="2003" name="Science">
        <title>In-depth view of structure, activity, and evolution of rice chromosome 10.</title>
        <authorList>
            <person name="Yu Y."/>
            <person name="Rambo T."/>
            <person name="Currie J."/>
            <person name="Saski C."/>
            <person name="Kim H.-R."/>
            <person name="Collura K."/>
            <person name="Thompson S."/>
            <person name="Simmons J."/>
            <person name="Yang T.-J."/>
            <person name="Nah G."/>
            <person name="Patel A.J."/>
            <person name="Thurmond S."/>
            <person name="Henry D."/>
            <person name="Oates R."/>
            <person name="Palmer M."/>
            <person name="Pries G."/>
            <person name="Gibson J."/>
            <person name="Anderson H."/>
            <person name="Paradkar M."/>
            <person name="Crane L."/>
            <person name="Dale J."/>
            <person name="Carver M.B."/>
            <person name="Wood T."/>
            <person name="Frisch D."/>
            <person name="Engler F."/>
            <person name="Soderlund C."/>
            <person name="Palmer L.E."/>
            <person name="Teytelman L."/>
            <person name="Nascimento L."/>
            <person name="De la Bastide M."/>
            <person name="Spiegel L."/>
            <person name="Ware D."/>
            <person name="O'Shaughnessy A."/>
            <person name="Dike S."/>
            <person name="Dedhia N."/>
            <person name="Preston R."/>
            <person name="Huang E."/>
            <person name="Ferraro K."/>
            <person name="Kuit K."/>
            <person name="Miller B."/>
            <person name="Zutavern T."/>
            <person name="Katzenberger F."/>
            <person name="Muller S."/>
            <person name="Balija V."/>
            <person name="Martienssen R.A."/>
            <person name="Stein L."/>
            <person name="Minx P."/>
            <person name="Johnson D."/>
            <person name="Cordum H."/>
            <person name="Mardis E."/>
            <person name="Cheng Z."/>
            <person name="Jiang J."/>
            <person name="Wilson R."/>
            <person name="McCombie W.R."/>
            <person name="Wing R.A."/>
            <person name="Yuan Q."/>
            <person name="Ouyang S."/>
            <person name="Liu J."/>
            <person name="Jones K.M."/>
            <person name="Gansberger K."/>
            <person name="Moffat K."/>
            <person name="Hill J."/>
            <person name="Tsitrin T."/>
            <person name="Overton L."/>
            <person name="Bera J."/>
            <person name="Kim M."/>
            <person name="Jin S."/>
            <person name="Tallon L."/>
            <person name="Ciecko A."/>
            <person name="Pai G."/>
            <person name="Van Aken S."/>
            <person name="Utterback T."/>
            <person name="Reidmuller S."/>
            <person name="Bormann J."/>
            <person name="Feldblyum T."/>
            <person name="Hsiao J."/>
            <person name="Zismann V."/>
            <person name="Blunt S."/>
            <person name="de Vazeille A.R."/>
            <person name="Shaffer T."/>
            <person name="Koo H."/>
            <person name="Suh B."/>
            <person name="Yang Q."/>
            <person name="Haas B."/>
            <person name="Peterson J."/>
            <person name="Pertea M."/>
            <person name="Volfovsky N."/>
            <person name="Wortman J."/>
            <person name="White O."/>
            <person name="Salzberg S.L."/>
            <person name="Fraser C.M."/>
            <person name="Buell C.R."/>
            <person name="Messing J."/>
            <person name="Song R."/>
            <person name="Fuks G."/>
            <person name="Llaca V."/>
            <person name="Kovchak S."/>
            <person name="Young S."/>
            <person name="Bowers J.E."/>
            <person name="Paterson A.H."/>
            <person name="Johns M.A."/>
            <person name="Mao L."/>
            <person name="Pan H."/>
            <person name="Dean R.A."/>
        </authorList>
    </citation>
    <scope>NUCLEOTIDE SEQUENCE [LARGE SCALE GENOMIC DNA]</scope>
    <source>
        <strain>cv. Nipponbare</strain>
    </source>
</reference>
<reference key="2">
    <citation type="journal article" date="2005" name="Nature">
        <title>The map-based sequence of the rice genome.</title>
        <authorList>
            <consortium name="International rice genome sequencing project (IRGSP)"/>
        </authorList>
    </citation>
    <scope>NUCLEOTIDE SEQUENCE [LARGE SCALE GENOMIC DNA]</scope>
    <source>
        <strain>cv. Nipponbare</strain>
    </source>
</reference>
<reference key="3">
    <citation type="journal article" date="2008" name="Nucleic Acids Res.">
        <title>The rice annotation project database (RAP-DB): 2008 update.</title>
        <authorList>
            <consortium name="The rice annotation project (RAP)"/>
        </authorList>
    </citation>
    <scope>GENOME REANNOTATION</scope>
    <source>
        <strain>cv. Nipponbare</strain>
    </source>
</reference>
<reference key="4">
    <citation type="journal article" date="2013" name="Rice">
        <title>Improvement of the Oryza sativa Nipponbare reference genome using next generation sequence and optical map data.</title>
        <authorList>
            <person name="Kawahara Y."/>
            <person name="de la Bastide M."/>
            <person name="Hamilton J.P."/>
            <person name="Kanamori H."/>
            <person name="McCombie W.R."/>
            <person name="Ouyang S."/>
            <person name="Schwartz D.C."/>
            <person name="Tanaka T."/>
            <person name="Wu J."/>
            <person name="Zhou S."/>
            <person name="Childs K.L."/>
            <person name="Davidson R.M."/>
            <person name="Lin H."/>
            <person name="Quesada-Ocampo L."/>
            <person name="Vaillancourt B."/>
            <person name="Sakai H."/>
            <person name="Lee S.S."/>
            <person name="Kim J."/>
            <person name="Numa H."/>
            <person name="Itoh T."/>
            <person name="Buell C.R."/>
            <person name="Matsumoto T."/>
        </authorList>
    </citation>
    <scope>GENOME REANNOTATION</scope>
    <source>
        <strain>cv. Nipponbare</strain>
    </source>
</reference>
<reference key="5">
    <citation type="journal article" date="2005" name="PLoS Biol.">
        <title>The genomes of Oryza sativa: a history of duplications.</title>
        <authorList>
            <person name="Yu J."/>
            <person name="Wang J."/>
            <person name="Lin W."/>
            <person name="Li S."/>
            <person name="Li H."/>
            <person name="Zhou J."/>
            <person name="Ni P."/>
            <person name="Dong W."/>
            <person name="Hu S."/>
            <person name="Zeng C."/>
            <person name="Zhang J."/>
            <person name="Zhang Y."/>
            <person name="Li R."/>
            <person name="Xu Z."/>
            <person name="Li S."/>
            <person name="Li X."/>
            <person name="Zheng H."/>
            <person name="Cong L."/>
            <person name="Lin L."/>
            <person name="Yin J."/>
            <person name="Geng J."/>
            <person name="Li G."/>
            <person name="Shi J."/>
            <person name="Liu J."/>
            <person name="Lv H."/>
            <person name="Li J."/>
            <person name="Wang J."/>
            <person name="Deng Y."/>
            <person name="Ran L."/>
            <person name="Shi X."/>
            <person name="Wang X."/>
            <person name="Wu Q."/>
            <person name="Li C."/>
            <person name="Ren X."/>
            <person name="Wang J."/>
            <person name="Wang X."/>
            <person name="Li D."/>
            <person name="Liu D."/>
            <person name="Zhang X."/>
            <person name="Ji Z."/>
            <person name="Zhao W."/>
            <person name="Sun Y."/>
            <person name="Zhang Z."/>
            <person name="Bao J."/>
            <person name="Han Y."/>
            <person name="Dong L."/>
            <person name="Ji J."/>
            <person name="Chen P."/>
            <person name="Wu S."/>
            <person name="Liu J."/>
            <person name="Xiao Y."/>
            <person name="Bu D."/>
            <person name="Tan J."/>
            <person name="Yang L."/>
            <person name="Ye C."/>
            <person name="Zhang J."/>
            <person name="Xu J."/>
            <person name="Zhou Y."/>
            <person name="Yu Y."/>
            <person name="Zhang B."/>
            <person name="Zhuang S."/>
            <person name="Wei H."/>
            <person name="Liu B."/>
            <person name="Lei M."/>
            <person name="Yu H."/>
            <person name="Li Y."/>
            <person name="Xu H."/>
            <person name="Wei S."/>
            <person name="He X."/>
            <person name="Fang L."/>
            <person name="Zhang Z."/>
            <person name="Zhang Y."/>
            <person name="Huang X."/>
            <person name="Su Z."/>
            <person name="Tong W."/>
            <person name="Li J."/>
            <person name="Tong Z."/>
            <person name="Li S."/>
            <person name="Ye J."/>
            <person name="Wang L."/>
            <person name="Fang L."/>
            <person name="Lei T."/>
            <person name="Chen C.-S."/>
            <person name="Chen H.-C."/>
            <person name="Xu Z."/>
            <person name="Li H."/>
            <person name="Huang H."/>
            <person name="Zhang F."/>
            <person name="Xu H."/>
            <person name="Li N."/>
            <person name="Zhao C."/>
            <person name="Li S."/>
            <person name="Dong L."/>
            <person name="Huang Y."/>
            <person name="Li L."/>
            <person name="Xi Y."/>
            <person name="Qi Q."/>
            <person name="Li W."/>
            <person name="Zhang B."/>
            <person name="Hu W."/>
            <person name="Zhang Y."/>
            <person name="Tian X."/>
            <person name="Jiao Y."/>
            <person name="Liang X."/>
            <person name="Jin J."/>
            <person name="Gao L."/>
            <person name="Zheng W."/>
            <person name="Hao B."/>
            <person name="Liu S.-M."/>
            <person name="Wang W."/>
            <person name="Yuan L."/>
            <person name="Cao M."/>
            <person name="McDermott J."/>
            <person name="Samudrala R."/>
            <person name="Wang J."/>
            <person name="Wong G.K.-S."/>
            <person name="Yang H."/>
        </authorList>
    </citation>
    <scope>NUCLEOTIDE SEQUENCE [LARGE SCALE GENOMIC DNA]</scope>
    <source>
        <strain>cv. Nipponbare</strain>
    </source>
</reference>
<reference key="6">
    <citation type="journal article" date="2003" name="Science">
        <title>Collection, mapping, and annotation of over 28,000 cDNA clones from japonica rice.</title>
        <authorList>
            <consortium name="The rice full-length cDNA consortium"/>
        </authorList>
    </citation>
    <scope>NUCLEOTIDE SEQUENCE [LARGE SCALE MRNA]</scope>
    <source>
        <strain>cv. Nipponbare</strain>
    </source>
</reference>
<accession>Q75G68</accession>
<accession>A0A0P0XW42</accession>
<accession>A3C5Y6</accession>
<feature type="chain" id="PRO_0000294000" description="Probable protein arginine N-methyltransferase 6.2">
    <location>
        <begin position="1"/>
        <end position="395"/>
    </location>
</feature>
<feature type="domain" description="SAM-dependent MTase PRMT-type" evidence="2">
    <location>
        <begin position="45"/>
        <end position="390"/>
    </location>
</feature>
<feature type="region of interest" description="Disordered" evidence="3">
    <location>
        <begin position="1"/>
        <end position="37"/>
    </location>
</feature>
<feature type="region of interest" description="Disordered" evidence="3">
    <location>
        <begin position="300"/>
        <end position="324"/>
    </location>
</feature>
<feature type="compositionally biased region" description="Gly residues" evidence="3">
    <location>
        <begin position="1"/>
        <end position="11"/>
    </location>
</feature>
<feature type="compositionally biased region" description="Polar residues" evidence="3">
    <location>
        <begin position="302"/>
        <end position="317"/>
    </location>
</feature>
<feature type="active site" evidence="1">
    <location>
        <position position="156"/>
    </location>
</feature>
<feature type="active site" evidence="1">
    <location>
        <position position="165"/>
    </location>
</feature>
<feature type="binding site" evidence="1">
    <location>
        <position position="58"/>
    </location>
    <ligand>
        <name>S-adenosyl-L-methionine</name>
        <dbReference type="ChEBI" id="CHEBI:59789"/>
    </ligand>
</feature>
<feature type="binding site" evidence="1">
    <location>
        <position position="67"/>
    </location>
    <ligand>
        <name>S-adenosyl-L-methionine</name>
        <dbReference type="ChEBI" id="CHEBI:59789"/>
    </ligand>
</feature>
<feature type="binding site" evidence="1">
    <location>
        <position position="91"/>
    </location>
    <ligand>
        <name>S-adenosyl-L-methionine</name>
        <dbReference type="ChEBI" id="CHEBI:59789"/>
    </ligand>
</feature>
<feature type="binding site" evidence="1">
    <location>
        <position position="113"/>
    </location>
    <ligand>
        <name>S-adenosyl-L-methionine</name>
        <dbReference type="ChEBI" id="CHEBI:59789"/>
    </ligand>
</feature>
<feature type="binding site" evidence="1">
    <location>
        <position position="142"/>
    </location>
    <ligand>
        <name>S-adenosyl-L-methionine</name>
        <dbReference type="ChEBI" id="CHEBI:59789"/>
    </ligand>
</feature>
<feature type="sequence conflict" description="In Ref. 6; AK101865." evidence="4" ref="6">
    <original>R</original>
    <variation>G</variation>
    <location>
        <position position="67"/>
    </location>
</feature>
<gene>
    <name type="primary">PRMT6.2</name>
    <name type="ordered locus">Os10g0489100</name>
    <name type="ordered locus">LOC_Os10g34740</name>
    <name type="ORF">B1288B10.2</name>
    <name type="ORF">OsJ_030708</name>
</gene>
<organism>
    <name type="scientific">Oryza sativa subsp. japonica</name>
    <name type="common">Rice</name>
    <dbReference type="NCBI Taxonomy" id="39947"/>
    <lineage>
        <taxon>Eukaryota</taxon>
        <taxon>Viridiplantae</taxon>
        <taxon>Streptophyta</taxon>
        <taxon>Embryophyta</taxon>
        <taxon>Tracheophyta</taxon>
        <taxon>Spermatophyta</taxon>
        <taxon>Magnoliopsida</taxon>
        <taxon>Liliopsida</taxon>
        <taxon>Poales</taxon>
        <taxon>Poaceae</taxon>
        <taxon>BOP clade</taxon>
        <taxon>Oryzoideae</taxon>
        <taxon>Oryzeae</taxon>
        <taxon>Oryzinae</taxon>
        <taxon>Oryza</taxon>
        <taxon>Oryza sativa</taxon>
    </lineage>
</organism>
<keyword id="KW-0489">Methyltransferase</keyword>
<keyword id="KW-1185">Reference proteome</keyword>
<keyword id="KW-0949">S-adenosyl-L-methionine</keyword>
<keyword id="KW-0808">Transferase</keyword>
<sequence length="395" mass="43978">MFAGGADGGNGHLPRPRRARRGGGGGGGMGSPPLGPPPPPCTDYDMAYFKAYSHIGVHEEMLKDHVRTNTYRNAIMHHQDLISGKVVLDVGCGTGVLSIFCAFAGAARVYAVDASDIALQAMEIVRENELSDKVIVLHGRIEDVEIEEKVDVIISEWMGYMLLYESMLGSVIFARDKWLKPGGLILPSHASLYLAPITNSHRYQDSVYFWQDVYGIKMSSMMPLAKQCAFMEPSVETISGENVLTWPSVVAQVDCYTIQAPELETITATFNYTSMLQAPLHGFAFWFDVEFNGPVRQRSKKQANQCLDGNTQDASPSNKKKKADAPIVLSTAPEDAPTHWQQTLLYLFEPIELKKDQNIEGSVTISQSQQHARFLNICLKYFTRDQWYVKESVMK</sequence>